<name>SUB1_ARTOC</name>
<evidence type="ECO:0000250" key="1"/>
<evidence type="ECO:0000255" key="2"/>
<evidence type="ECO:0000255" key="3">
    <source>
        <dbReference type="PROSITE-ProRule" id="PRU01240"/>
    </source>
</evidence>
<evidence type="ECO:0000256" key="4">
    <source>
        <dbReference type="SAM" id="MobiDB-lite"/>
    </source>
</evidence>
<evidence type="ECO:0000305" key="5"/>
<dbReference type="EC" id="3.4.21.-"/>
<dbReference type="EMBL" id="DS995704">
    <property type="protein sequence ID" value="EEQ31676.1"/>
    <property type="molecule type" value="Genomic_DNA"/>
</dbReference>
<dbReference type="RefSeq" id="XP_002846758.1">
    <property type="nucleotide sequence ID" value="XM_002846712.1"/>
</dbReference>
<dbReference type="SMR" id="C5FPS1"/>
<dbReference type="STRING" id="554155.C5FPS1"/>
<dbReference type="MEROPS" id="S08.062"/>
<dbReference type="GlyCosmos" id="C5FPS1">
    <property type="glycosylation" value="1 site, No reported glycans"/>
</dbReference>
<dbReference type="GeneID" id="9229872"/>
<dbReference type="VEuPathDB" id="FungiDB:MCYG_04495"/>
<dbReference type="eggNOG" id="KOG1153">
    <property type="taxonomic scope" value="Eukaryota"/>
</dbReference>
<dbReference type="HOGENOM" id="CLU_011263_1_3_1"/>
<dbReference type="OMA" id="HTHNITR"/>
<dbReference type="OrthoDB" id="206201at2759"/>
<dbReference type="Proteomes" id="UP000002035">
    <property type="component" value="Unassembled WGS sequence"/>
</dbReference>
<dbReference type="GO" id="GO:0005576">
    <property type="term" value="C:extracellular region"/>
    <property type="evidence" value="ECO:0007669"/>
    <property type="project" value="UniProtKB-SubCell"/>
</dbReference>
<dbReference type="GO" id="GO:0004252">
    <property type="term" value="F:serine-type endopeptidase activity"/>
    <property type="evidence" value="ECO:0007669"/>
    <property type="project" value="InterPro"/>
</dbReference>
<dbReference type="GO" id="GO:0006508">
    <property type="term" value="P:proteolysis"/>
    <property type="evidence" value="ECO:0007669"/>
    <property type="project" value="UniProtKB-KW"/>
</dbReference>
<dbReference type="CDD" id="cd04077">
    <property type="entry name" value="Peptidases_S8_PCSK9_ProteinaseK_like"/>
    <property type="match status" value="1"/>
</dbReference>
<dbReference type="FunFam" id="3.40.50.200:FF:000014">
    <property type="entry name" value="Proteinase K"/>
    <property type="match status" value="1"/>
</dbReference>
<dbReference type="Gene3D" id="3.30.70.80">
    <property type="entry name" value="Peptidase S8 propeptide/proteinase inhibitor I9"/>
    <property type="match status" value="1"/>
</dbReference>
<dbReference type="Gene3D" id="3.40.50.200">
    <property type="entry name" value="Peptidase S8/S53 domain"/>
    <property type="match status" value="1"/>
</dbReference>
<dbReference type="InterPro" id="IPR034193">
    <property type="entry name" value="PCSK9_ProteinaseK-like"/>
</dbReference>
<dbReference type="InterPro" id="IPR000209">
    <property type="entry name" value="Peptidase_S8/S53_dom"/>
</dbReference>
<dbReference type="InterPro" id="IPR036852">
    <property type="entry name" value="Peptidase_S8/S53_dom_sf"/>
</dbReference>
<dbReference type="InterPro" id="IPR023828">
    <property type="entry name" value="Peptidase_S8_Ser-AS"/>
</dbReference>
<dbReference type="InterPro" id="IPR050131">
    <property type="entry name" value="Peptidase_S8_subtilisin-like"/>
</dbReference>
<dbReference type="InterPro" id="IPR015500">
    <property type="entry name" value="Peptidase_S8_subtilisin-rel"/>
</dbReference>
<dbReference type="InterPro" id="IPR010259">
    <property type="entry name" value="S8pro/Inhibitor_I9"/>
</dbReference>
<dbReference type="InterPro" id="IPR037045">
    <property type="entry name" value="S8pro/Inhibitor_I9_sf"/>
</dbReference>
<dbReference type="PANTHER" id="PTHR43806:SF58">
    <property type="entry name" value="ALKALINE PROTEASE 1-RELATED"/>
    <property type="match status" value="1"/>
</dbReference>
<dbReference type="PANTHER" id="PTHR43806">
    <property type="entry name" value="PEPTIDASE S8"/>
    <property type="match status" value="1"/>
</dbReference>
<dbReference type="Pfam" id="PF05922">
    <property type="entry name" value="Inhibitor_I9"/>
    <property type="match status" value="1"/>
</dbReference>
<dbReference type="Pfam" id="PF00082">
    <property type="entry name" value="Peptidase_S8"/>
    <property type="match status" value="1"/>
</dbReference>
<dbReference type="PRINTS" id="PR00723">
    <property type="entry name" value="SUBTILISIN"/>
</dbReference>
<dbReference type="SUPFAM" id="SSF54897">
    <property type="entry name" value="Protease propeptides/inhibitors"/>
    <property type="match status" value="1"/>
</dbReference>
<dbReference type="SUPFAM" id="SSF52743">
    <property type="entry name" value="Subtilisin-like"/>
    <property type="match status" value="1"/>
</dbReference>
<dbReference type="PROSITE" id="PS51892">
    <property type="entry name" value="SUBTILASE"/>
    <property type="match status" value="1"/>
</dbReference>
<dbReference type="PROSITE" id="PS00138">
    <property type="entry name" value="SUBTILASE_SER"/>
    <property type="match status" value="1"/>
</dbReference>
<organism>
    <name type="scientific">Arthroderma otae (strain ATCC MYA-4605 / CBS 113480)</name>
    <name type="common">Microsporum canis</name>
    <dbReference type="NCBI Taxonomy" id="554155"/>
    <lineage>
        <taxon>Eukaryota</taxon>
        <taxon>Fungi</taxon>
        <taxon>Dikarya</taxon>
        <taxon>Ascomycota</taxon>
        <taxon>Pezizomycotina</taxon>
        <taxon>Eurotiomycetes</taxon>
        <taxon>Eurotiomycetidae</taxon>
        <taxon>Onygenales</taxon>
        <taxon>Arthrodermataceae</taxon>
        <taxon>Microsporum</taxon>
    </lineage>
</organism>
<feature type="signal peptide" evidence="2">
    <location>
        <begin position="1"/>
        <end position="19"/>
    </location>
</feature>
<feature type="propeptide" id="PRO_0000384063" evidence="1">
    <location>
        <begin position="20"/>
        <end position="116"/>
    </location>
</feature>
<feature type="chain" id="PRO_0000384064" description="Subtilisin-like protease 1">
    <location>
        <begin position="117"/>
        <end position="485"/>
    </location>
</feature>
<feature type="domain" description="Inhibitor I9" evidence="2">
    <location>
        <begin position="34"/>
        <end position="116"/>
    </location>
</feature>
<feature type="domain" description="Peptidase S8" evidence="3">
    <location>
        <begin position="126"/>
        <end position="400"/>
    </location>
</feature>
<feature type="region of interest" description="Disordered" evidence="4">
    <location>
        <begin position="377"/>
        <end position="462"/>
    </location>
</feature>
<feature type="compositionally biased region" description="Polar residues" evidence="4">
    <location>
        <begin position="377"/>
        <end position="394"/>
    </location>
</feature>
<feature type="compositionally biased region" description="Pro residues" evidence="4">
    <location>
        <begin position="409"/>
        <end position="418"/>
    </location>
</feature>
<feature type="compositionally biased region" description="Low complexity" evidence="4">
    <location>
        <begin position="419"/>
        <end position="428"/>
    </location>
</feature>
<feature type="compositionally biased region" description="Pro residues" evidence="4">
    <location>
        <begin position="433"/>
        <end position="455"/>
    </location>
</feature>
<feature type="active site" description="Charge relay system" evidence="3">
    <location>
        <position position="158"/>
    </location>
</feature>
<feature type="active site" description="Charge relay system" evidence="3">
    <location>
        <position position="190"/>
    </location>
</feature>
<feature type="active site" description="Charge relay system" evidence="3">
    <location>
        <position position="345"/>
    </location>
</feature>
<feature type="glycosylation site" description="N-linked (GlcNAc...) asparagine" evidence="2">
    <location>
        <position position="251"/>
    </location>
</feature>
<proteinExistence type="inferred from homology"/>
<keyword id="KW-0325">Glycoprotein</keyword>
<keyword id="KW-0378">Hydrolase</keyword>
<keyword id="KW-0645">Protease</keyword>
<keyword id="KW-1185">Reference proteome</keyword>
<keyword id="KW-0964">Secreted</keyword>
<keyword id="KW-0720">Serine protease</keyword>
<keyword id="KW-0732">Signal</keyword>
<keyword id="KW-0843">Virulence</keyword>
<keyword id="KW-0865">Zymogen</keyword>
<accession>C5FPS1</accession>
<protein>
    <recommendedName>
        <fullName>Subtilisin-like protease 1</fullName>
        <ecNumber>3.4.21.-</ecNumber>
    </recommendedName>
</protein>
<gene>
    <name type="primary">SUB1</name>
    <name type="ORF">MCYG_04495</name>
</gene>
<comment type="function">
    <text evidence="1">Secreted subtilisin-like serine protease with keratinolytic activity that contributes to pathogenicity.</text>
</comment>
<comment type="subcellular location">
    <subcellularLocation>
        <location evidence="1">Secreted</location>
    </subcellularLocation>
</comment>
<comment type="similarity">
    <text evidence="5">Belongs to the peptidase S8 family.</text>
</comment>
<reference key="1">
    <citation type="journal article" date="2012" name="MBio">
        <title>Comparative genome analysis of Trichophyton rubrum and related dermatophytes reveals candidate genes involved in infection.</title>
        <authorList>
            <person name="Martinez D.A."/>
            <person name="Oliver B.G."/>
            <person name="Graeser Y."/>
            <person name="Goldberg J.M."/>
            <person name="Li W."/>
            <person name="Martinez-Rossi N.M."/>
            <person name="Monod M."/>
            <person name="Shelest E."/>
            <person name="Barton R.C."/>
            <person name="Birch E."/>
            <person name="Brakhage A.A."/>
            <person name="Chen Z."/>
            <person name="Gurr S.J."/>
            <person name="Heiman D."/>
            <person name="Heitman J."/>
            <person name="Kosti I."/>
            <person name="Rossi A."/>
            <person name="Saif S."/>
            <person name="Samalova M."/>
            <person name="Saunders C.W."/>
            <person name="Shea T."/>
            <person name="Summerbell R.C."/>
            <person name="Xu J."/>
            <person name="Young S."/>
            <person name="Zeng Q."/>
            <person name="Birren B.W."/>
            <person name="Cuomo C.A."/>
            <person name="White T.C."/>
        </authorList>
    </citation>
    <scope>NUCLEOTIDE SEQUENCE [LARGE SCALE GENOMIC DNA]</scope>
    <source>
        <strain>ATCC MYA-4605 / CBS 113480</strain>
    </source>
</reference>
<sequence length="485" mass="51283">MGIFRFISISLAAVSAANAGHILSMGHAKTIPNSYIVVMKDGTTEEDFTHHQSWVQSIHTHNVTRRGLLDNAGVRHKYGFGSMMGYAGLFDEDTIKDISDDPKVMFVEPDTTITIHGELTQNDVPSWGLARISSQRPGTEDYTYDSSAGEGITVYSVDTGVDIHHEDFEGRASWGTNMIEDGYDKDGNGHGTHTAGTMVGKTFGIAKKAKVVAVKVLDNNGSGPTSGIIAGINWCAQHASQNGGTDKAVINMSLGGGSSSALNRAAAQAVQKGMFLAVAAGNDNQDARTSSPASEDTVCTVGASAENDERSSFSNWGPAVDLFAPGSNIVSTRPGGGSQSMSGTSMASPHVAGLGAYIMALEGISGSAVCDRLKQLGTSSVTNPGPGTRTNILINNGDAKNGGKKPSQPSQPPKPSQPSKPQQPSEPQEPSEPQEPAPGQPAPAPAPVPQHPHTPFPNDDFNFDDFWKKYFGTDHWRKTFGRFWN</sequence>